<feature type="chain" id="PRO_1000063181" description="1-(5-phosphoribosyl)-5-[(5-phosphoribosylamino)methylideneamino] imidazole-4-carboxamide isomerase">
    <location>
        <begin position="1"/>
        <end position="237"/>
    </location>
</feature>
<feature type="active site" description="Proton acceptor" evidence="1">
    <location>
        <position position="8"/>
    </location>
</feature>
<feature type="active site" description="Proton donor" evidence="1">
    <location>
        <position position="129"/>
    </location>
</feature>
<keyword id="KW-0028">Amino-acid biosynthesis</keyword>
<keyword id="KW-0963">Cytoplasm</keyword>
<keyword id="KW-0368">Histidine biosynthesis</keyword>
<keyword id="KW-0413">Isomerase</keyword>
<keyword id="KW-1185">Reference proteome</keyword>
<comment type="catalytic activity">
    <reaction evidence="1">
        <text>1-(5-phospho-beta-D-ribosyl)-5-[(5-phospho-beta-D-ribosylamino)methylideneamino]imidazole-4-carboxamide = 5-[(5-phospho-1-deoxy-D-ribulos-1-ylimino)methylamino]-1-(5-phospho-beta-D-ribosyl)imidazole-4-carboxamide</text>
        <dbReference type="Rhea" id="RHEA:15469"/>
        <dbReference type="ChEBI" id="CHEBI:58435"/>
        <dbReference type="ChEBI" id="CHEBI:58525"/>
        <dbReference type="EC" id="5.3.1.16"/>
    </reaction>
</comment>
<comment type="pathway">
    <text evidence="1">Amino-acid biosynthesis; L-histidine biosynthesis; L-histidine from 5-phospho-alpha-D-ribose 1-diphosphate: step 4/9.</text>
</comment>
<comment type="subcellular location">
    <subcellularLocation>
        <location evidence="1">Cytoplasm</location>
    </subcellularLocation>
</comment>
<comment type="similarity">
    <text evidence="1">Belongs to the HisA/HisF family.</text>
</comment>
<protein>
    <recommendedName>
        <fullName evidence="1">1-(5-phosphoribosyl)-5-[(5-phosphoribosylamino)methylideneamino] imidazole-4-carboxamide isomerase</fullName>
        <ecNumber evidence="1">5.3.1.16</ecNumber>
    </recommendedName>
    <alternativeName>
        <fullName evidence="1">Phosphoribosylformimino-5-aminoimidazole carboxamide ribotide isomerase</fullName>
    </alternativeName>
</protein>
<name>HIS4_ALKMQ</name>
<dbReference type="EC" id="5.3.1.16" evidence="1"/>
<dbReference type="EMBL" id="CP000724">
    <property type="protein sequence ID" value="ABR46803.1"/>
    <property type="molecule type" value="Genomic_DNA"/>
</dbReference>
<dbReference type="RefSeq" id="WP_011971711.1">
    <property type="nucleotide sequence ID" value="NC_009633.1"/>
</dbReference>
<dbReference type="SMR" id="A6TKT5"/>
<dbReference type="STRING" id="293826.Amet_0576"/>
<dbReference type="KEGG" id="amt:Amet_0576"/>
<dbReference type="eggNOG" id="COG0106">
    <property type="taxonomic scope" value="Bacteria"/>
</dbReference>
<dbReference type="HOGENOM" id="CLU_048577_1_1_9"/>
<dbReference type="OrthoDB" id="9807749at2"/>
<dbReference type="UniPathway" id="UPA00031">
    <property type="reaction ID" value="UER00009"/>
</dbReference>
<dbReference type="Proteomes" id="UP000001572">
    <property type="component" value="Chromosome"/>
</dbReference>
<dbReference type="GO" id="GO:0005737">
    <property type="term" value="C:cytoplasm"/>
    <property type="evidence" value="ECO:0007669"/>
    <property type="project" value="UniProtKB-SubCell"/>
</dbReference>
<dbReference type="GO" id="GO:0003949">
    <property type="term" value="F:1-(5-phosphoribosyl)-5-[(5-phosphoribosylamino)methylideneamino]imidazole-4-carboxamide isomerase activity"/>
    <property type="evidence" value="ECO:0007669"/>
    <property type="project" value="UniProtKB-UniRule"/>
</dbReference>
<dbReference type="GO" id="GO:0000105">
    <property type="term" value="P:L-histidine biosynthetic process"/>
    <property type="evidence" value="ECO:0007669"/>
    <property type="project" value="UniProtKB-UniRule"/>
</dbReference>
<dbReference type="GO" id="GO:0000162">
    <property type="term" value="P:L-tryptophan biosynthetic process"/>
    <property type="evidence" value="ECO:0007669"/>
    <property type="project" value="TreeGrafter"/>
</dbReference>
<dbReference type="CDD" id="cd04732">
    <property type="entry name" value="HisA"/>
    <property type="match status" value="1"/>
</dbReference>
<dbReference type="FunFam" id="3.20.20.70:FF:000009">
    <property type="entry name" value="1-(5-phosphoribosyl)-5-[(5-phosphoribosylamino)methylideneamino] imidazole-4-carboxamide isomerase"/>
    <property type="match status" value="1"/>
</dbReference>
<dbReference type="Gene3D" id="3.20.20.70">
    <property type="entry name" value="Aldolase class I"/>
    <property type="match status" value="1"/>
</dbReference>
<dbReference type="HAMAP" id="MF_01014">
    <property type="entry name" value="HisA"/>
    <property type="match status" value="1"/>
</dbReference>
<dbReference type="InterPro" id="IPR013785">
    <property type="entry name" value="Aldolase_TIM"/>
</dbReference>
<dbReference type="InterPro" id="IPR006062">
    <property type="entry name" value="His_biosynth"/>
</dbReference>
<dbReference type="InterPro" id="IPR006063">
    <property type="entry name" value="HisA_bact_arch"/>
</dbReference>
<dbReference type="InterPro" id="IPR044524">
    <property type="entry name" value="Isoase_HisA-like"/>
</dbReference>
<dbReference type="InterPro" id="IPR023016">
    <property type="entry name" value="Isoase_HisA-like_bact"/>
</dbReference>
<dbReference type="InterPro" id="IPR011060">
    <property type="entry name" value="RibuloseP-bd_barrel"/>
</dbReference>
<dbReference type="NCBIfam" id="TIGR00007">
    <property type="entry name" value="1-(5-phosphoribosyl)-5-[(5-phosphoribosylamino)methylideneamino]imidazole-4-carboxamide isomerase"/>
    <property type="match status" value="1"/>
</dbReference>
<dbReference type="NCBIfam" id="NF010112">
    <property type="entry name" value="PRK13585.1"/>
    <property type="match status" value="1"/>
</dbReference>
<dbReference type="PANTHER" id="PTHR43090">
    <property type="entry name" value="1-(5-PHOSPHORIBOSYL)-5-[(5-PHOSPHORIBOSYLAMINO)METHYLIDENEAMINO] IMIDAZOLE-4-CARBOXAMIDE ISOMERASE"/>
    <property type="match status" value="1"/>
</dbReference>
<dbReference type="PANTHER" id="PTHR43090:SF2">
    <property type="entry name" value="1-(5-PHOSPHORIBOSYL)-5-[(5-PHOSPHORIBOSYLAMINO)METHYLIDENEAMINO] IMIDAZOLE-4-CARBOXAMIDE ISOMERASE"/>
    <property type="match status" value="1"/>
</dbReference>
<dbReference type="Pfam" id="PF00977">
    <property type="entry name" value="His_biosynth"/>
    <property type="match status" value="1"/>
</dbReference>
<dbReference type="SUPFAM" id="SSF51366">
    <property type="entry name" value="Ribulose-phoshate binding barrel"/>
    <property type="match status" value="1"/>
</dbReference>
<gene>
    <name evidence="1" type="primary">hisA</name>
    <name type="ordered locus">Amet_0576</name>
</gene>
<evidence type="ECO:0000255" key="1">
    <source>
        <dbReference type="HAMAP-Rule" id="MF_01014"/>
    </source>
</evidence>
<organism>
    <name type="scientific">Alkaliphilus metalliredigens (strain QYMF)</name>
    <dbReference type="NCBI Taxonomy" id="293826"/>
    <lineage>
        <taxon>Bacteria</taxon>
        <taxon>Bacillati</taxon>
        <taxon>Bacillota</taxon>
        <taxon>Clostridia</taxon>
        <taxon>Peptostreptococcales</taxon>
        <taxon>Natronincolaceae</taxon>
        <taxon>Alkaliphilus</taxon>
    </lineage>
</organism>
<accession>A6TKT5</accession>
<proteinExistence type="inferred from homology"/>
<reference key="1">
    <citation type="journal article" date="2016" name="Genome Announc.">
        <title>Complete genome sequence of Alkaliphilus metalliredigens strain QYMF, an alkaliphilic and metal-reducing bacterium isolated from borax-contaminated leachate ponds.</title>
        <authorList>
            <person name="Hwang C."/>
            <person name="Copeland A."/>
            <person name="Lucas S."/>
            <person name="Lapidus A."/>
            <person name="Barry K."/>
            <person name="Detter J.C."/>
            <person name="Glavina Del Rio T."/>
            <person name="Hammon N."/>
            <person name="Israni S."/>
            <person name="Dalin E."/>
            <person name="Tice H."/>
            <person name="Pitluck S."/>
            <person name="Chertkov O."/>
            <person name="Brettin T."/>
            <person name="Bruce D."/>
            <person name="Han C."/>
            <person name="Schmutz J."/>
            <person name="Larimer F."/>
            <person name="Land M.L."/>
            <person name="Hauser L."/>
            <person name="Kyrpides N."/>
            <person name="Mikhailova N."/>
            <person name="Ye Q."/>
            <person name="Zhou J."/>
            <person name="Richardson P."/>
            <person name="Fields M.W."/>
        </authorList>
    </citation>
    <scope>NUCLEOTIDE SEQUENCE [LARGE SCALE GENOMIC DNA]</scope>
    <source>
        <strain>QYMF</strain>
    </source>
</reference>
<sequence length="237" mass="26025">MIIYPAIDIQGGQCVRLTQGKKEERKMYFDSPQAVAQRWQAEGAEFIHVVDLDGAFGKGEENMEAIEAIVKAVEIPIQVGGGIRSIEKIQQLLDLGVTRVILGTKALTDEAFLREAIEKYGDRIIVSIDAKEGYVATEGWVKTSSRRALDFAKSIEEIGVKRIVYTDIAKDGMLQGPNFDEIQRMKDSVGMEVIASGGISCETDLQGLKEMDVKGVIVGKALYEGKVQLGKLRGMDI</sequence>